<comment type="function">
    <text evidence="5">This is a receptor for the tachykinin neuropeptide substance K (neurokinin A). It is associated with G proteins that activate a phosphatidylinositol-calcium second messenger system. The rank order of affinity of this receptor to tachykinins is: substance K &gt; neuromedin-K &gt; substance P.</text>
</comment>
<comment type="interaction">
    <interactant intactId="EBI-6655413">
        <id>P21452</id>
    </interactant>
    <interactant intactId="EBI-6655449">
        <id>PRO_0000033534</id>
        <label>TAC1</label>
        <dbReference type="UniProtKB" id="P20366"/>
    </interactant>
    <organismsDiffer>false</organismsDiffer>
    <experiments>2</experiments>
</comment>
<comment type="subcellular location">
    <subcellularLocation>
        <location>Cell membrane</location>
        <topology>Multi-pass membrane protein</topology>
    </subcellularLocation>
</comment>
<comment type="similarity">
    <text evidence="2">Belongs to the G-protein coupled receptor 1 family.</text>
</comment>
<keyword id="KW-0002">3D-structure</keyword>
<keyword id="KW-1003">Cell membrane</keyword>
<keyword id="KW-1015">Disulfide bond</keyword>
<keyword id="KW-0297">G-protein coupled receptor</keyword>
<keyword id="KW-0325">Glycoprotein</keyword>
<keyword id="KW-0449">Lipoprotein</keyword>
<keyword id="KW-0472">Membrane</keyword>
<keyword id="KW-0564">Palmitate</keyword>
<keyword id="KW-0675">Receptor</keyword>
<keyword id="KW-1185">Reference proteome</keyword>
<keyword id="KW-0807">Transducer</keyword>
<keyword id="KW-0812">Transmembrane</keyword>
<keyword id="KW-1133">Transmembrane helix</keyword>
<evidence type="ECO:0000255" key="1"/>
<evidence type="ECO:0000255" key="2">
    <source>
        <dbReference type="PROSITE-ProRule" id="PRU00521"/>
    </source>
</evidence>
<evidence type="ECO:0000269" key="3">
    <source>
    </source>
</evidence>
<evidence type="ECO:0000269" key="4">
    <source>
    </source>
</evidence>
<evidence type="ECO:0000269" key="5">
    <source>
    </source>
</evidence>
<evidence type="ECO:0000269" key="6">
    <source>
    </source>
</evidence>
<evidence type="ECO:0000269" key="7">
    <source>
    </source>
</evidence>
<evidence type="ECO:0000269" key="8">
    <source>
    </source>
</evidence>
<evidence type="ECO:0000269" key="9">
    <source ref="10"/>
</evidence>
<evidence type="ECO:0000269" key="10">
    <source ref="9"/>
</evidence>
<evidence type="ECO:0000305" key="11"/>
<evidence type="ECO:0007829" key="12">
    <source>
        <dbReference type="PDB" id="7XWO"/>
    </source>
</evidence>
<gene>
    <name type="primary">TACR2</name>
    <name type="synonym">NK2R</name>
    <name type="synonym">NKNAR</name>
    <name type="synonym">TAC2R</name>
</gene>
<sequence length="398" mass="44442">MGTCDIVTEANISSGPESNTTGITAFSMPSWQLALWATAYLALVLVAVTGNAIVIWIILAHRRMRTVTNYFIVNLALADLCMAAFNAAFNFVYASHNIWYFGRAFCYFQNLFPITAMFVSIYSMTAIAADRYMAIVHPFQPRLSAPSTKAVIAGIWLVALALASPQCFYSTVTMDQGATKCVVAWPEDSGGKTLLLYHLVVIALIYFLPLAVMFVAYSVIGLTLWRRAVPGHQAHGANLRHLQAMKKFVKTMVLVVLTFAICWLPYHLYFILGSFQEDIYCHKFIQQVYLALFWLAMSSTMYNPIIYCCLNHRFRSGFRLAFRCCPWVTPTKEDKLELTPTTSLSTRVNRCHTKETLFMAGDTAPSEATSGEAGRPQDGSGLWFGYGLLAPTKTHVEI</sequence>
<accession>P21452</accession>
<accession>A8K7I1</accession>
<accession>Q4QRI5</accession>
<accession>Q8NGQ8</accession>
<accession>Q9UDE6</accession>
<accession>Q9UDE7</accession>
<feature type="chain" id="PRO_0000069893" description="Substance-K receptor">
    <location>
        <begin position="1"/>
        <end position="398"/>
    </location>
</feature>
<feature type="topological domain" description="Extracellular" evidence="1">
    <location>
        <begin position="1"/>
        <end position="32"/>
    </location>
</feature>
<feature type="transmembrane region" description="Helical; Name=1" evidence="1">
    <location>
        <begin position="33"/>
        <end position="56"/>
    </location>
</feature>
<feature type="topological domain" description="Cytoplasmic" evidence="1">
    <location>
        <begin position="57"/>
        <end position="69"/>
    </location>
</feature>
<feature type="transmembrane region" description="Helical; Name=2" evidence="1">
    <location>
        <begin position="70"/>
        <end position="90"/>
    </location>
</feature>
<feature type="topological domain" description="Extracellular" evidence="1">
    <location>
        <begin position="91"/>
        <end position="107"/>
    </location>
</feature>
<feature type="transmembrane region" description="Helical; Name=3" evidence="1">
    <location>
        <begin position="108"/>
        <end position="129"/>
    </location>
</feature>
<feature type="topological domain" description="Cytoplasmic" evidence="1">
    <location>
        <begin position="130"/>
        <end position="149"/>
    </location>
</feature>
<feature type="transmembrane region" description="Helical; Name=4" evidence="1">
    <location>
        <begin position="150"/>
        <end position="170"/>
    </location>
</feature>
<feature type="topological domain" description="Extracellular" evidence="1">
    <location>
        <begin position="171"/>
        <end position="196"/>
    </location>
</feature>
<feature type="transmembrane region" description="Helical; Name=5" evidence="1">
    <location>
        <begin position="197"/>
        <end position="218"/>
    </location>
</feature>
<feature type="topological domain" description="Cytoplasmic" evidence="1">
    <location>
        <begin position="219"/>
        <end position="251"/>
    </location>
</feature>
<feature type="transmembrane region" description="Helical; Name=6" evidence="1">
    <location>
        <begin position="252"/>
        <end position="272"/>
    </location>
</feature>
<feature type="topological domain" description="Extracellular" evidence="1">
    <location>
        <begin position="273"/>
        <end position="290"/>
    </location>
</feature>
<feature type="transmembrane region" description="Helical; Name=7" evidence="1">
    <location>
        <begin position="291"/>
        <end position="310"/>
    </location>
</feature>
<feature type="topological domain" description="Cytoplasmic" evidence="1">
    <location>
        <begin position="311"/>
        <end position="398"/>
    </location>
</feature>
<feature type="lipid moiety-binding region" description="S-palmitoyl cysteine" evidence="1">
    <location>
        <position position="324"/>
    </location>
</feature>
<feature type="glycosylation site" description="N-linked (GlcNAc...) asparagine" evidence="1">
    <location>
        <position position="11"/>
    </location>
</feature>
<feature type="glycosylation site" description="N-linked (GlcNAc...) asparagine" evidence="1">
    <location>
        <position position="19"/>
    </location>
</feature>
<feature type="disulfide bond" evidence="2">
    <location>
        <begin position="106"/>
        <end position="181"/>
    </location>
</feature>
<feature type="sequence variant" id="VAR_016159" description="In dbSNP:rs5030920." evidence="5 6">
    <original>I</original>
    <variation>T</variation>
    <location>
        <position position="23"/>
    </location>
</feature>
<feature type="sequence variant" id="VAR_061221" description="In dbSNP:rs57500981.">
    <original>A</original>
    <variation>T</variation>
    <location>
        <position position="47"/>
    </location>
</feature>
<feature type="sequence variant" id="VAR_061222" description="In dbSNP:rs55953810." evidence="3 4 5 6 8 9 10">
    <original>M</original>
    <variation>K</variation>
    <location>
        <position position="245"/>
    </location>
</feature>
<feature type="sequence variant" id="VAR_061223" description="In dbSNP:rs57900755.">
    <original>T</original>
    <variation>A</variation>
    <location>
        <position position="363"/>
    </location>
</feature>
<feature type="sequence variant" id="VAR_014680" description="In dbSNP:rs2229170." evidence="7">
    <original>R</original>
    <variation>H</variation>
    <location>
        <position position="375"/>
    </location>
</feature>
<feature type="sequence variant" id="VAR_061224" description="In dbSNP:rs58692969.">
    <original>H</original>
    <variation>R</variation>
    <location>
        <position position="395"/>
    </location>
</feature>
<feature type="sequence conflict" description="In Ref. 1; AAC31760/AAA60347." evidence="11" ref="1">
    <original>T</original>
    <variation>P</variation>
    <location>
        <position position="38"/>
    </location>
</feature>
<feature type="sequence conflict" description="In Ref. 4." evidence="11" ref="4">
    <original>Y</original>
    <variation>V</variation>
    <location>
        <position position="40"/>
    </location>
</feature>
<feature type="sequence conflict" description="In Ref. 11; AAH96842." evidence="11" ref="11">
    <original>L</original>
    <variation>P</variation>
    <location>
        <position position="264"/>
    </location>
</feature>
<feature type="sequence conflict" description="In Ref. 6." evidence="11" ref="6">
    <original>F</original>
    <variation>FF</variation>
    <location>
        <position position="293"/>
    </location>
</feature>
<feature type="sequence conflict" description="In Ref. 11; AAH96842." evidence="11" ref="11">
    <original>P</original>
    <variation>R</variation>
    <location>
        <position position="340"/>
    </location>
</feature>
<feature type="helix" evidence="12">
    <location>
        <begin position="30"/>
        <end position="47"/>
    </location>
</feature>
<feature type="turn" evidence="12">
    <location>
        <begin position="48"/>
        <end position="51"/>
    </location>
</feature>
<feature type="helix" evidence="12">
    <location>
        <begin position="52"/>
        <end position="59"/>
    </location>
</feature>
<feature type="turn" evidence="12">
    <location>
        <begin position="67"/>
        <end position="69"/>
    </location>
</feature>
<feature type="helix" evidence="12">
    <location>
        <begin position="70"/>
        <end position="85"/>
    </location>
</feature>
<feature type="helix" evidence="12">
    <location>
        <begin position="89"/>
        <end position="95"/>
    </location>
</feature>
<feature type="helix" evidence="12">
    <location>
        <begin position="105"/>
        <end position="108"/>
    </location>
</feature>
<feature type="turn" evidence="12">
    <location>
        <begin position="109"/>
        <end position="111"/>
    </location>
</feature>
<feature type="helix" evidence="12">
    <location>
        <begin position="112"/>
        <end position="122"/>
    </location>
</feature>
<feature type="helix" evidence="12">
    <location>
        <begin position="124"/>
        <end position="130"/>
    </location>
</feature>
<feature type="helix" evidence="12">
    <location>
        <begin position="132"/>
        <end position="135"/>
    </location>
</feature>
<feature type="turn" evidence="12">
    <location>
        <begin position="145"/>
        <end position="148"/>
    </location>
</feature>
<feature type="helix" evidence="12">
    <location>
        <begin position="149"/>
        <end position="162"/>
    </location>
</feature>
<feature type="helix" evidence="12">
    <location>
        <begin position="164"/>
        <end position="167"/>
    </location>
</feature>
<feature type="strand" evidence="12">
    <location>
        <begin position="175"/>
        <end position="178"/>
    </location>
</feature>
<feature type="helix" evidence="12">
    <location>
        <begin position="193"/>
        <end position="196"/>
    </location>
</feature>
<feature type="helix" evidence="12">
    <location>
        <begin position="198"/>
        <end position="204"/>
    </location>
</feature>
<feature type="helix" evidence="12">
    <location>
        <begin position="207"/>
        <end position="225"/>
    </location>
</feature>
<feature type="turn" evidence="12">
    <location>
        <begin position="239"/>
        <end position="241"/>
    </location>
</feature>
<feature type="helix" evidence="12">
    <location>
        <begin position="242"/>
        <end position="260"/>
    </location>
</feature>
<feature type="helix" evidence="12">
    <location>
        <begin position="264"/>
        <end position="267"/>
    </location>
</feature>
<feature type="helix" evidence="12">
    <location>
        <begin position="268"/>
        <end position="270"/>
    </location>
</feature>
<feature type="strand" evidence="12">
    <location>
        <begin position="282"/>
        <end position="284"/>
    </location>
</feature>
<feature type="helix" evidence="12">
    <location>
        <begin position="285"/>
        <end position="294"/>
    </location>
</feature>
<feature type="helix" evidence="12">
    <location>
        <begin position="296"/>
        <end position="298"/>
    </location>
</feature>
<feature type="helix" evidence="12">
    <location>
        <begin position="299"/>
        <end position="309"/>
    </location>
</feature>
<feature type="strand" evidence="12">
    <location>
        <begin position="310"/>
        <end position="312"/>
    </location>
</feature>
<proteinExistence type="evidence at protein level"/>
<organism>
    <name type="scientific">Homo sapiens</name>
    <name type="common">Human</name>
    <dbReference type="NCBI Taxonomy" id="9606"/>
    <lineage>
        <taxon>Eukaryota</taxon>
        <taxon>Metazoa</taxon>
        <taxon>Chordata</taxon>
        <taxon>Craniata</taxon>
        <taxon>Vertebrata</taxon>
        <taxon>Euteleostomi</taxon>
        <taxon>Mammalia</taxon>
        <taxon>Eutheria</taxon>
        <taxon>Euarchontoglires</taxon>
        <taxon>Primates</taxon>
        <taxon>Haplorrhini</taxon>
        <taxon>Catarrhini</taxon>
        <taxon>Hominidae</taxon>
        <taxon>Homo</taxon>
    </lineage>
</organism>
<dbReference type="EMBL" id="M57414">
    <property type="protein sequence ID" value="AAC31760.1"/>
    <property type="molecule type" value="mRNA"/>
</dbReference>
<dbReference type="EMBL" id="M60284">
    <property type="protein sequence ID" value="AAA60347.1"/>
    <property type="molecule type" value="Genomic_DNA"/>
</dbReference>
<dbReference type="EMBL" id="M57415">
    <property type="protein sequence ID" value="AAA60347.1"/>
    <property type="status" value="JOINED"/>
    <property type="molecule type" value="Genomic_DNA"/>
</dbReference>
<dbReference type="EMBL" id="M60281">
    <property type="protein sequence ID" value="AAA60347.1"/>
    <property type="status" value="JOINED"/>
    <property type="molecule type" value="Genomic_DNA"/>
</dbReference>
<dbReference type="EMBL" id="M60282">
    <property type="protein sequence ID" value="AAA60347.1"/>
    <property type="status" value="JOINED"/>
    <property type="molecule type" value="Genomic_DNA"/>
</dbReference>
<dbReference type="EMBL" id="M60283">
    <property type="protein sequence ID" value="AAA60347.1"/>
    <property type="status" value="JOINED"/>
    <property type="molecule type" value="Genomic_DNA"/>
</dbReference>
<dbReference type="EMBL" id="M75105">
    <property type="protein sequence ID" value="AAB05897.1"/>
    <property type="molecule type" value="Genomic_DNA"/>
</dbReference>
<dbReference type="EMBL" id="M75101">
    <property type="protein sequence ID" value="AAB05897.1"/>
    <property type="status" value="JOINED"/>
    <property type="molecule type" value="Genomic_DNA"/>
</dbReference>
<dbReference type="EMBL" id="M75102">
    <property type="protein sequence ID" value="AAB05897.1"/>
    <property type="status" value="JOINED"/>
    <property type="molecule type" value="Genomic_DNA"/>
</dbReference>
<dbReference type="EMBL" id="M75103">
    <property type="protein sequence ID" value="AAB05897.1"/>
    <property type="status" value="JOINED"/>
    <property type="molecule type" value="Genomic_DNA"/>
</dbReference>
<dbReference type="EMBL" id="M75104">
    <property type="protein sequence ID" value="AAB05897.1"/>
    <property type="status" value="JOINED"/>
    <property type="molecule type" value="Genomic_DNA"/>
</dbReference>
<dbReference type="EMBL" id="AB065731">
    <property type="protein sequence ID" value="BAC05952.1"/>
    <property type="molecule type" value="Genomic_DNA"/>
</dbReference>
<dbReference type="EMBL" id="AK291996">
    <property type="protein sequence ID" value="BAF84685.1"/>
    <property type="molecule type" value="mRNA"/>
</dbReference>
<dbReference type="EMBL" id="AY322545">
    <property type="protein sequence ID" value="AAP84358.1"/>
    <property type="molecule type" value="mRNA"/>
</dbReference>
<dbReference type="EMBL" id="CH471083">
    <property type="protein sequence ID" value="EAW54324.1"/>
    <property type="molecule type" value="Genomic_DNA"/>
</dbReference>
<dbReference type="EMBL" id="BC096842">
    <property type="protein sequence ID" value="AAH96842.1"/>
    <property type="molecule type" value="mRNA"/>
</dbReference>
<dbReference type="CCDS" id="CCDS7293.1"/>
<dbReference type="PIR" id="JQ1059">
    <property type="entry name" value="JQ1059"/>
</dbReference>
<dbReference type="RefSeq" id="NP_001048.2">
    <property type="nucleotide sequence ID" value="NM_001057.3"/>
</dbReference>
<dbReference type="PDB" id="7XWO">
    <property type="method" value="EM"/>
    <property type="resolution" value="2.70 A"/>
    <property type="chains" value="B=1-345"/>
</dbReference>
<dbReference type="PDBsum" id="7XWO"/>
<dbReference type="EMDB" id="EMD-33497"/>
<dbReference type="SMR" id="P21452"/>
<dbReference type="BioGRID" id="112728">
    <property type="interactions" value="4"/>
</dbReference>
<dbReference type="CORUM" id="P21452"/>
<dbReference type="ELM" id="P21452"/>
<dbReference type="FunCoup" id="P21452">
    <property type="interactions" value="602"/>
</dbReference>
<dbReference type="IntAct" id="P21452">
    <property type="interactions" value="1"/>
</dbReference>
<dbReference type="STRING" id="9606.ENSP00000362403"/>
<dbReference type="BindingDB" id="P21452"/>
<dbReference type="ChEMBL" id="CHEMBL2327"/>
<dbReference type="DrugBank" id="DB12042">
    <property type="generic name" value="Ibodutant"/>
</dbReference>
<dbReference type="DrugBank" id="DB06660">
    <property type="generic name" value="Saredutant"/>
</dbReference>
<dbReference type="DrugBank" id="DB13083">
    <property type="generic name" value="Talarozole"/>
</dbReference>
<dbReference type="DrugCentral" id="P21452"/>
<dbReference type="GuidetoPHARMACOLOGY" id="361"/>
<dbReference type="GlyCosmos" id="P21452">
    <property type="glycosylation" value="2 sites, No reported glycans"/>
</dbReference>
<dbReference type="GlyGen" id="P21452">
    <property type="glycosylation" value="2 sites"/>
</dbReference>
<dbReference type="iPTMnet" id="P21452"/>
<dbReference type="PhosphoSitePlus" id="P21452"/>
<dbReference type="BioMuta" id="TACR2"/>
<dbReference type="DMDM" id="229462950"/>
<dbReference type="MassIVE" id="P21452"/>
<dbReference type="PaxDb" id="9606-ENSP00000362403"/>
<dbReference type="PeptideAtlas" id="P21452"/>
<dbReference type="ProteomicsDB" id="53870"/>
<dbReference type="Antibodypedia" id="1518">
    <property type="antibodies" value="300 antibodies from 35 providers"/>
</dbReference>
<dbReference type="DNASU" id="6865"/>
<dbReference type="Ensembl" id="ENST00000373306.5">
    <property type="protein sequence ID" value="ENSP00000362403.4"/>
    <property type="gene ID" value="ENSG00000075073.16"/>
</dbReference>
<dbReference type="GeneID" id="6865"/>
<dbReference type="KEGG" id="hsa:6865"/>
<dbReference type="MANE-Select" id="ENST00000373306.5">
    <property type="protein sequence ID" value="ENSP00000362403.4"/>
    <property type="RefSeq nucleotide sequence ID" value="NM_001057.3"/>
    <property type="RefSeq protein sequence ID" value="NP_001048.2"/>
</dbReference>
<dbReference type="UCSC" id="uc001jpn.3">
    <property type="organism name" value="human"/>
</dbReference>
<dbReference type="AGR" id="HGNC:11527"/>
<dbReference type="CTD" id="6865"/>
<dbReference type="DisGeNET" id="6865"/>
<dbReference type="GeneCards" id="TACR2"/>
<dbReference type="HGNC" id="HGNC:11527">
    <property type="gene designation" value="TACR2"/>
</dbReference>
<dbReference type="HPA" id="ENSG00000075073">
    <property type="expression patterns" value="Tissue enriched (intestine)"/>
</dbReference>
<dbReference type="MIM" id="162321">
    <property type="type" value="gene"/>
</dbReference>
<dbReference type="neXtProt" id="NX_P21452"/>
<dbReference type="OpenTargets" id="ENSG00000075073"/>
<dbReference type="PharmGKB" id="PA36303"/>
<dbReference type="VEuPathDB" id="HostDB:ENSG00000075073"/>
<dbReference type="eggNOG" id="KOG4219">
    <property type="taxonomic scope" value="Eukaryota"/>
</dbReference>
<dbReference type="GeneTree" id="ENSGT00940000155512"/>
<dbReference type="InParanoid" id="P21452"/>
<dbReference type="OMA" id="RRVNRCH"/>
<dbReference type="OrthoDB" id="5981855at2759"/>
<dbReference type="PAN-GO" id="P21452">
    <property type="GO annotations" value="4 GO annotations based on evolutionary models"/>
</dbReference>
<dbReference type="PhylomeDB" id="P21452"/>
<dbReference type="TreeFam" id="TF315303"/>
<dbReference type="PathwayCommons" id="P21452"/>
<dbReference type="Reactome" id="R-HSA-380095">
    <property type="pathway name" value="Tachykinin receptors bind tachykinins"/>
</dbReference>
<dbReference type="Reactome" id="R-HSA-416476">
    <property type="pathway name" value="G alpha (q) signalling events"/>
</dbReference>
<dbReference type="SignaLink" id="P21452"/>
<dbReference type="SIGNOR" id="P21452"/>
<dbReference type="BioGRID-ORCS" id="6865">
    <property type="hits" value="14 hits in 1148 CRISPR screens"/>
</dbReference>
<dbReference type="ChiTaRS" id="TACR2">
    <property type="organism name" value="human"/>
</dbReference>
<dbReference type="GeneWiki" id="Tachykinin_receptor_2"/>
<dbReference type="GenomeRNAi" id="6865"/>
<dbReference type="Pharos" id="P21452">
    <property type="development level" value="Tchem"/>
</dbReference>
<dbReference type="PRO" id="PR:P21452"/>
<dbReference type="Proteomes" id="UP000005640">
    <property type="component" value="Chromosome 10"/>
</dbReference>
<dbReference type="RNAct" id="P21452">
    <property type="molecule type" value="protein"/>
</dbReference>
<dbReference type="Bgee" id="ENSG00000075073">
    <property type="expression patterns" value="Expressed in mucosa of stomach and 112 other cell types or tissues"/>
</dbReference>
<dbReference type="ExpressionAtlas" id="P21452">
    <property type="expression patterns" value="baseline and differential"/>
</dbReference>
<dbReference type="GO" id="GO:0005886">
    <property type="term" value="C:plasma membrane"/>
    <property type="evidence" value="ECO:0000314"/>
    <property type="project" value="HPA"/>
</dbReference>
<dbReference type="GO" id="GO:0036126">
    <property type="term" value="C:sperm flagellum"/>
    <property type="evidence" value="ECO:0000314"/>
    <property type="project" value="UniProtKB"/>
</dbReference>
<dbReference type="GO" id="GO:0061827">
    <property type="term" value="C:sperm head"/>
    <property type="evidence" value="ECO:0000314"/>
    <property type="project" value="UniProtKB"/>
</dbReference>
<dbReference type="GO" id="GO:0097225">
    <property type="term" value="C:sperm midpiece"/>
    <property type="evidence" value="ECO:0000314"/>
    <property type="project" value="UniProtKB"/>
</dbReference>
<dbReference type="GO" id="GO:0016497">
    <property type="term" value="F:substance K receptor activity"/>
    <property type="evidence" value="ECO:0000318"/>
    <property type="project" value="GO_Central"/>
</dbReference>
<dbReference type="GO" id="GO:0004995">
    <property type="term" value="F:tachykinin receptor activity"/>
    <property type="evidence" value="ECO:0000304"/>
    <property type="project" value="ProtInc"/>
</dbReference>
<dbReference type="GO" id="GO:0014827">
    <property type="term" value="P:intestine smooth muscle contraction"/>
    <property type="evidence" value="ECO:0007669"/>
    <property type="project" value="Ensembl"/>
</dbReference>
<dbReference type="GO" id="GO:0006936">
    <property type="term" value="P:muscle contraction"/>
    <property type="evidence" value="ECO:0000304"/>
    <property type="project" value="ProtInc"/>
</dbReference>
<dbReference type="GO" id="GO:0033685">
    <property type="term" value="P:negative regulation of luteinizing hormone secretion"/>
    <property type="evidence" value="ECO:0007669"/>
    <property type="project" value="Ensembl"/>
</dbReference>
<dbReference type="GO" id="GO:0035106">
    <property type="term" value="P:operant conditioning"/>
    <property type="evidence" value="ECO:0007669"/>
    <property type="project" value="Ensembl"/>
</dbReference>
<dbReference type="GO" id="GO:0014057">
    <property type="term" value="P:positive regulation of acetylcholine secretion, neurotransmission"/>
    <property type="evidence" value="ECO:0007669"/>
    <property type="project" value="Ensembl"/>
</dbReference>
<dbReference type="GO" id="GO:1902093">
    <property type="term" value="P:positive regulation of flagellated sperm motility"/>
    <property type="evidence" value="ECO:0000315"/>
    <property type="project" value="UniProtKB"/>
</dbReference>
<dbReference type="GO" id="GO:0043270">
    <property type="term" value="P:positive regulation of monoatomic ion transport"/>
    <property type="evidence" value="ECO:0007669"/>
    <property type="project" value="Ensembl"/>
</dbReference>
<dbReference type="GO" id="GO:0045987">
    <property type="term" value="P:positive regulation of smooth muscle contraction"/>
    <property type="evidence" value="ECO:0000304"/>
    <property type="project" value="ProtInc"/>
</dbReference>
<dbReference type="GO" id="GO:0070474">
    <property type="term" value="P:positive regulation of uterine smooth muscle contraction"/>
    <property type="evidence" value="ECO:0007669"/>
    <property type="project" value="Ensembl"/>
</dbReference>
<dbReference type="GO" id="GO:0043117">
    <property type="term" value="P:positive regulation of vascular permeability"/>
    <property type="evidence" value="ECO:0007669"/>
    <property type="project" value="Ensembl"/>
</dbReference>
<dbReference type="GO" id="GO:0070459">
    <property type="term" value="P:prolactin secretion"/>
    <property type="evidence" value="ECO:0007669"/>
    <property type="project" value="Ensembl"/>
</dbReference>
<dbReference type="GO" id="GO:0051602">
    <property type="term" value="P:response to electrical stimulus"/>
    <property type="evidence" value="ECO:0007669"/>
    <property type="project" value="Ensembl"/>
</dbReference>
<dbReference type="GO" id="GO:0007217">
    <property type="term" value="P:tachykinin receptor signaling pathway"/>
    <property type="evidence" value="ECO:0000304"/>
    <property type="project" value="ProtInc"/>
</dbReference>
<dbReference type="CDD" id="cd16004">
    <property type="entry name" value="7tmA_SKR_NK2R"/>
    <property type="match status" value="1"/>
</dbReference>
<dbReference type="FunFam" id="1.20.1070.10:FF:000224">
    <property type="entry name" value="Tachykinin receptor 2"/>
    <property type="match status" value="1"/>
</dbReference>
<dbReference type="Gene3D" id="1.20.1070.10">
    <property type="entry name" value="Rhodopsin 7-helix transmembrane proteins"/>
    <property type="match status" value="1"/>
</dbReference>
<dbReference type="InterPro" id="IPR000276">
    <property type="entry name" value="GPCR_Rhodpsn"/>
</dbReference>
<dbReference type="InterPro" id="IPR017452">
    <property type="entry name" value="GPCR_Rhodpsn_7TM"/>
</dbReference>
<dbReference type="InterPro" id="IPR001681">
    <property type="entry name" value="Neurokn_rcpt"/>
</dbReference>
<dbReference type="InterPro" id="IPR000913">
    <property type="entry name" value="NK2_rcpt"/>
</dbReference>
<dbReference type="PANTHER" id="PTHR46925">
    <property type="entry name" value="G-PROTEIN COUPLED RECEPTOR TKR-1-RELATED"/>
    <property type="match status" value="1"/>
</dbReference>
<dbReference type="PANTHER" id="PTHR46925:SF3">
    <property type="entry name" value="SUBSTANCE-K RECEPTOR"/>
    <property type="match status" value="1"/>
</dbReference>
<dbReference type="Pfam" id="PF00001">
    <property type="entry name" value="7tm_1"/>
    <property type="match status" value="1"/>
</dbReference>
<dbReference type="PRINTS" id="PR00237">
    <property type="entry name" value="GPCRRHODOPSN"/>
</dbReference>
<dbReference type="PRINTS" id="PR01025">
    <property type="entry name" value="NEUROKININ2R"/>
</dbReference>
<dbReference type="PRINTS" id="PR00244">
    <property type="entry name" value="NEUROKININR"/>
</dbReference>
<dbReference type="SMART" id="SM01381">
    <property type="entry name" value="7TM_GPCR_Srsx"/>
    <property type="match status" value="1"/>
</dbReference>
<dbReference type="SUPFAM" id="SSF81321">
    <property type="entry name" value="Family A G protein-coupled receptor-like"/>
    <property type="match status" value="1"/>
</dbReference>
<dbReference type="PROSITE" id="PS00237">
    <property type="entry name" value="G_PROTEIN_RECEP_F1_1"/>
    <property type="match status" value="1"/>
</dbReference>
<dbReference type="PROSITE" id="PS50262">
    <property type="entry name" value="G_PROTEIN_RECEP_F1_2"/>
    <property type="match status" value="1"/>
</dbReference>
<name>NK2R_HUMAN</name>
<protein>
    <recommendedName>
        <fullName>Substance-K receptor</fullName>
        <shortName>SKR</shortName>
    </recommendedName>
    <alternativeName>
        <fullName>NK-2 receptor</fullName>
        <shortName>NK-2R</shortName>
    </alternativeName>
    <alternativeName>
        <fullName>Neurokinin A receptor</fullName>
    </alternativeName>
    <alternativeName>
        <fullName>Tachykinin receptor 2</fullName>
    </alternativeName>
</protein>
<reference key="1">
    <citation type="journal article" date="1990" name="J. Biol. Chem.">
        <title>The human neurokinin A (substance K) receptor. Molecular cloning of the gene, chromosome localization, and isolation of cDNA from tracheal and gastric tissues.</title>
        <authorList>
            <person name="Gerard N.P."/>
            <person name="Eddy R.L. Jr."/>
            <person name="Shows T.B."/>
            <person name="Gerard C."/>
        </authorList>
    </citation>
    <scope>NUCLEOTIDE SEQUENCE [GENOMIC DNA / MRNA]</scope>
    <scope>VARIANT LYS-245</scope>
    <source>
        <tissue>Stomach</tissue>
        <tissue>Trachea</tissue>
    </source>
</reference>
<reference key="2">
    <citation type="journal article" date="1991" name="J. Biol. Chem.">
        <authorList>
            <person name="Gerard N.P."/>
            <person name="Eddy R.L. Jr."/>
            <person name="Shows T.B."/>
            <person name="Gerard C."/>
        </authorList>
    </citation>
    <scope>ERRATUM OF PUBMED:2173708</scope>
</reference>
<reference key="3">
    <citation type="journal article" date="1991" name="Ann. N. Y. Acad. Sci.">
        <title>Molecular cloning of the human neurokinin-2 receptor cDNA by polymerase chain reaction and isolation of the gene.</title>
        <authorList>
            <person name="Gerard N.P."/>
            <person name="Gerard C."/>
        </authorList>
    </citation>
    <scope>NUCLEOTIDE SEQUENCE [MRNA]</scope>
</reference>
<reference key="4">
    <citation type="journal article" date="1991" name="Ann. N. Y. Acad. Sci.">
        <title>Cloning, expression of the human substance K receptor, and analysis of its role in mitogenesis.</title>
        <authorList>
            <person name="Cyr C."/>
            <person name="South V."/>
            <person name="Saltzman A."/>
            <person name="Felder S."/>
            <person name="Ricca G.A."/>
            <person name="Jaye M."/>
            <person name="Huebner K."/>
            <person name="Kagan J."/>
            <person name="Croce C.M."/>
            <person name="Schlessinger J."/>
        </authorList>
    </citation>
    <scope>NUCLEOTIDE SEQUENCE [MRNA]</scope>
    <scope>FUNCTION</scope>
    <scope>VARIANTS THR-23 AND LYS-245</scope>
    <source>
        <tissue>Jejunum</tissue>
    </source>
</reference>
<reference key="5">
    <citation type="journal article" date="1991" name="Biochem. Biophys. Res. Commun.">
        <title>Isolation and characterisation of the human lung NK-2 receptor gene using rapid amplification of cDNA ends.</title>
        <authorList>
            <person name="Graham A."/>
            <person name="Hopkins B."/>
            <person name="Powell S.J."/>
            <person name="Danks P."/>
            <person name="Briggs I."/>
        </authorList>
    </citation>
    <scope>NUCLEOTIDE SEQUENCE [GENOMIC DNA]</scope>
    <scope>VARIANTS THR-23 AND LYS-245</scope>
    <source>
        <tissue>Lung</tissue>
    </source>
</reference>
<reference key="6">
    <citation type="journal article" date="1991" name="Cell Growth Differ.">
        <title>Cloning and expression of the human substance K receptor and analysis of its role in mitogenesis.</title>
        <authorList>
            <person name="Kris R.M."/>
            <person name="South V."/>
            <person name="Saltzman A."/>
            <person name="Felder S."/>
            <person name="Ricca G.A."/>
            <person name="Jaye M."/>
            <person name="Huebner K."/>
            <person name="Kagan J."/>
            <person name="Croce C.M."/>
            <person name="Schlessinger J."/>
        </authorList>
    </citation>
    <scope>NUCLEOTIDE SEQUENCE [MRNA]</scope>
    <scope>VARIANT HIS-375</scope>
</reference>
<reference key="7">
    <citation type="submission" date="2001-07" db="EMBL/GenBank/DDBJ databases">
        <title>Genome-wide discovery and analysis of human seven transmembrane helix receptor genes.</title>
        <authorList>
            <person name="Suwa M."/>
            <person name="Sato T."/>
            <person name="Okouchi I."/>
            <person name="Arita M."/>
            <person name="Futami K."/>
            <person name="Matsumoto S."/>
            <person name="Tsutsumi S."/>
            <person name="Aburatani H."/>
            <person name="Asai K."/>
            <person name="Akiyama Y."/>
        </authorList>
    </citation>
    <scope>NUCLEOTIDE SEQUENCE [GENOMIC DNA]</scope>
</reference>
<reference key="8">
    <citation type="journal article" date="2004" name="Nat. Genet.">
        <title>Complete sequencing and characterization of 21,243 full-length human cDNAs.</title>
        <authorList>
            <person name="Ota T."/>
            <person name="Suzuki Y."/>
            <person name="Nishikawa T."/>
            <person name="Otsuki T."/>
            <person name="Sugiyama T."/>
            <person name="Irie R."/>
            <person name="Wakamatsu A."/>
            <person name="Hayashi K."/>
            <person name="Sato H."/>
            <person name="Nagai K."/>
            <person name="Kimura K."/>
            <person name="Makita H."/>
            <person name="Sekine M."/>
            <person name="Obayashi M."/>
            <person name="Nishi T."/>
            <person name="Shibahara T."/>
            <person name="Tanaka T."/>
            <person name="Ishii S."/>
            <person name="Yamamoto J."/>
            <person name="Saito K."/>
            <person name="Kawai Y."/>
            <person name="Isono Y."/>
            <person name="Nakamura Y."/>
            <person name="Nagahari K."/>
            <person name="Murakami K."/>
            <person name="Yasuda T."/>
            <person name="Iwayanagi T."/>
            <person name="Wagatsuma M."/>
            <person name="Shiratori A."/>
            <person name="Sudo H."/>
            <person name="Hosoiri T."/>
            <person name="Kaku Y."/>
            <person name="Kodaira H."/>
            <person name="Kondo H."/>
            <person name="Sugawara M."/>
            <person name="Takahashi M."/>
            <person name="Kanda K."/>
            <person name="Yokoi T."/>
            <person name="Furuya T."/>
            <person name="Kikkawa E."/>
            <person name="Omura Y."/>
            <person name="Abe K."/>
            <person name="Kamihara K."/>
            <person name="Katsuta N."/>
            <person name="Sato K."/>
            <person name="Tanikawa M."/>
            <person name="Yamazaki M."/>
            <person name="Ninomiya K."/>
            <person name="Ishibashi T."/>
            <person name="Yamashita H."/>
            <person name="Murakawa K."/>
            <person name="Fujimori K."/>
            <person name="Tanai H."/>
            <person name="Kimata M."/>
            <person name="Watanabe M."/>
            <person name="Hiraoka S."/>
            <person name="Chiba Y."/>
            <person name="Ishida S."/>
            <person name="Ono Y."/>
            <person name="Takiguchi S."/>
            <person name="Watanabe S."/>
            <person name="Yosida M."/>
            <person name="Hotuta T."/>
            <person name="Kusano J."/>
            <person name="Kanehori K."/>
            <person name="Takahashi-Fujii A."/>
            <person name="Hara H."/>
            <person name="Tanase T.-O."/>
            <person name="Nomura Y."/>
            <person name="Togiya S."/>
            <person name="Komai F."/>
            <person name="Hara R."/>
            <person name="Takeuchi K."/>
            <person name="Arita M."/>
            <person name="Imose N."/>
            <person name="Musashino K."/>
            <person name="Yuuki H."/>
            <person name="Oshima A."/>
            <person name="Sasaki N."/>
            <person name="Aotsuka S."/>
            <person name="Yoshikawa Y."/>
            <person name="Matsunawa H."/>
            <person name="Ichihara T."/>
            <person name="Shiohata N."/>
            <person name="Sano S."/>
            <person name="Moriya S."/>
            <person name="Momiyama H."/>
            <person name="Satoh N."/>
            <person name="Takami S."/>
            <person name="Terashima Y."/>
            <person name="Suzuki O."/>
            <person name="Nakagawa S."/>
            <person name="Senoh A."/>
            <person name="Mizoguchi H."/>
            <person name="Goto Y."/>
            <person name="Shimizu F."/>
            <person name="Wakebe H."/>
            <person name="Hishigaki H."/>
            <person name="Watanabe T."/>
            <person name="Sugiyama A."/>
            <person name="Takemoto M."/>
            <person name="Kawakami B."/>
            <person name="Yamazaki M."/>
            <person name="Watanabe K."/>
            <person name="Kumagai A."/>
            <person name="Itakura S."/>
            <person name="Fukuzumi Y."/>
            <person name="Fujimori Y."/>
            <person name="Komiyama M."/>
            <person name="Tashiro H."/>
            <person name="Tanigami A."/>
            <person name="Fujiwara T."/>
            <person name="Ono T."/>
            <person name="Yamada K."/>
            <person name="Fujii Y."/>
            <person name="Ozaki K."/>
            <person name="Hirao M."/>
            <person name="Ohmori Y."/>
            <person name="Kawabata A."/>
            <person name="Hikiji T."/>
            <person name="Kobatake N."/>
            <person name="Inagaki H."/>
            <person name="Ikema Y."/>
            <person name="Okamoto S."/>
            <person name="Okitani R."/>
            <person name="Kawakami T."/>
            <person name="Noguchi S."/>
            <person name="Itoh T."/>
            <person name="Shigeta K."/>
            <person name="Senba T."/>
            <person name="Matsumura K."/>
            <person name="Nakajima Y."/>
            <person name="Mizuno T."/>
            <person name="Morinaga M."/>
            <person name="Sasaki M."/>
            <person name="Togashi T."/>
            <person name="Oyama M."/>
            <person name="Hata H."/>
            <person name="Watanabe M."/>
            <person name="Komatsu T."/>
            <person name="Mizushima-Sugano J."/>
            <person name="Satoh T."/>
            <person name="Shirai Y."/>
            <person name="Takahashi Y."/>
            <person name="Nakagawa K."/>
            <person name="Okumura K."/>
            <person name="Nagase T."/>
            <person name="Nomura N."/>
            <person name="Kikuchi H."/>
            <person name="Masuho Y."/>
            <person name="Yamashita R."/>
            <person name="Nakai K."/>
            <person name="Yada T."/>
            <person name="Nakamura Y."/>
            <person name="Ohara O."/>
            <person name="Isogai T."/>
            <person name="Sugano S."/>
        </authorList>
    </citation>
    <scope>NUCLEOTIDE SEQUENCE [LARGE SCALE MRNA]</scope>
    <scope>VARIANT LYS-245</scope>
    <source>
        <tissue>Small intestine</tissue>
    </source>
</reference>
<reference key="9">
    <citation type="submission" date="2003-06" db="EMBL/GenBank/DDBJ databases">
        <title>cDNA clones of human proteins involved in signal transduction sequenced by the Guthrie cDNA resource center (www.cdna.org).</title>
        <authorList>
            <person name="Kopatz S.A."/>
            <person name="Aronstam R.S."/>
            <person name="Sharma S.V."/>
        </authorList>
    </citation>
    <scope>NUCLEOTIDE SEQUENCE [LARGE SCALE MRNA]</scope>
    <scope>VARIANT LYS-245</scope>
    <source>
        <tissue>Stomach</tissue>
    </source>
</reference>
<reference key="10">
    <citation type="submission" date="2005-07" db="EMBL/GenBank/DDBJ databases">
        <authorList>
            <person name="Mural R.J."/>
            <person name="Istrail S."/>
            <person name="Sutton G.G."/>
            <person name="Florea L."/>
            <person name="Halpern A.L."/>
            <person name="Mobarry C.M."/>
            <person name="Lippert R."/>
            <person name="Walenz B."/>
            <person name="Shatkay H."/>
            <person name="Dew I."/>
            <person name="Miller J.R."/>
            <person name="Flanigan M.J."/>
            <person name="Edwards N.J."/>
            <person name="Bolanos R."/>
            <person name="Fasulo D."/>
            <person name="Halldorsson B.V."/>
            <person name="Hannenhalli S."/>
            <person name="Turner R."/>
            <person name="Yooseph S."/>
            <person name="Lu F."/>
            <person name="Nusskern D.R."/>
            <person name="Shue B.C."/>
            <person name="Zheng X.H."/>
            <person name="Zhong F."/>
            <person name="Delcher A.L."/>
            <person name="Huson D.H."/>
            <person name="Kravitz S.A."/>
            <person name="Mouchard L."/>
            <person name="Reinert K."/>
            <person name="Remington K.A."/>
            <person name="Clark A.G."/>
            <person name="Waterman M.S."/>
            <person name="Eichler E.E."/>
            <person name="Adams M.D."/>
            <person name="Hunkapiller M.W."/>
            <person name="Myers E.W."/>
            <person name="Venter J.C."/>
        </authorList>
    </citation>
    <scope>NUCLEOTIDE SEQUENCE [LARGE SCALE GENOMIC DNA]</scope>
    <scope>VARIANT LYS-245</scope>
</reference>
<reference key="11">
    <citation type="journal article" date="2004" name="Genome Res.">
        <title>The status, quality, and expansion of the NIH full-length cDNA project: the Mammalian Gene Collection (MGC).</title>
        <authorList>
            <consortium name="The MGC Project Team"/>
        </authorList>
    </citation>
    <scope>NUCLEOTIDE SEQUENCE [LARGE SCALE MRNA]</scope>
    <scope>VARIANT LYS-245</scope>
</reference>